<comment type="function">
    <text evidence="3">Transcriptional repressor of the gmuBACDREFG operon which is involved in the uptake and degradation of glucomannan.</text>
</comment>
<comment type="subcellular location">
    <subcellularLocation>
        <location evidence="1">Cytoplasm</location>
    </subcellularLocation>
</comment>
<comment type="induction">
    <text evidence="3">Up-regulated by konjac glucomannan and by cellobiose and mannobiose, the possible degradation products of glucomannan. Repressed by glucose via the carbon catabolite repression system.</text>
</comment>
<organism>
    <name type="scientific">Bacillus subtilis (strain 168)</name>
    <dbReference type="NCBI Taxonomy" id="224308"/>
    <lineage>
        <taxon>Bacteria</taxon>
        <taxon>Bacillati</taxon>
        <taxon>Bacillota</taxon>
        <taxon>Bacilli</taxon>
        <taxon>Bacillales</taxon>
        <taxon>Bacillaceae</taxon>
        <taxon>Bacillus</taxon>
    </lineage>
</organism>
<reference key="1">
    <citation type="journal article" date="1997" name="Microbiology">
        <title>Nucleotide sequence and analysis of the phoB-rrnE-groESL region of the Bacillus subtilis chromosome.</title>
        <authorList>
            <person name="Sadaie Y."/>
            <person name="Yata K."/>
            <person name="Fujita M."/>
            <person name="Sagai H."/>
            <person name="Itaya M."/>
            <person name="Kasahara Y."/>
            <person name="Ogasawara N."/>
        </authorList>
    </citation>
    <scope>NUCLEOTIDE SEQUENCE [GENOMIC DNA]</scope>
    <source>
        <strain>168 / JH642</strain>
    </source>
</reference>
<reference key="2">
    <citation type="journal article" date="1997" name="Nature">
        <title>The complete genome sequence of the Gram-positive bacterium Bacillus subtilis.</title>
        <authorList>
            <person name="Kunst F."/>
            <person name="Ogasawara N."/>
            <person name="Moszer I."/>
            <person name="Albertini A.M."/>
            <person name="Alloni G."/>
            <person name="Azevedo V."/>
            <person name="Bertero M.G."/>
            <person name="Bessieres P."/>
            <person name="Bolotin A."/>
            <person name="Borchert S."/>
            <person name="Borriss R."/>
            <person name="Boursier L."/>
            <person name="Brans A."/>
            <person name="Braun M."/>
            <person name="Brignell S.C."/>
            <person name="Bron S."/>
            <person name="Brouillet S."/>
            <person name="Bruschi C.V."/>
            <person name="Caldwell B."/>
            <person name="Capuano V."/>
            <person name="Carter N.M."/>
            <person name="Choi S.-K."/>
            <person name="Codani J.-J."/>
            <person name="Connerton I.F."/>
            <person name="Cummings N.J."/>
            <person name="Daniel R.A."/>
            <person name="Denizot F."/>
            <person name="Devine K.M."/>
            <person name="Duesterhoeft A."/>
            <person name="Ehrlich S.D."/>
            <person name="Emmerson P.T."/>
            <person name="Entian K.-D."/>
            <person name="Errington J."/>
            <person name="Fabret C."/>
            <person name="Ferrari E."/>
            <person name="Foulger D."/>
            <person name="Fritz C."/>
            <person name="Fujita M."/>
            <person name="Fujita Y."/>
            <person name="Fuma S."/>
            <person name="Galizzi A."/>
            <person name="Galleron N."/>
            <person name="Ghim S.-Y."/>
            <person name="Glaser P."/>
            <person name="Goffeau A."/>
            <person name="Golightly E.J."/>
            <person name="Grandi G."/>
            <person name="Guiseppi G."/>
            <person name="Guy B.J."/>
            <person name="Haga K."/>
            <person name="Haiech J."/>
            <person name="Harwood C.R."/>
            <person name="Henaut A."/>
            <person name="Hilbert H."/>
            <person name="Holsappel S."/>
            <person name="Hosono S."/>
            <person name="Hullo M.-F."/>
            <person name="Itaya M."/>
            <person name="Jones L.-M."/>
            <person name="Joris B."/>
            <person name="Karamata D."/>
            <person name="Kasahara Y."/>
            <person name="Klaerr-Blanchard M."/>
            <person name="Klein C."/>
            <person name="Kobayashi Y."/>
            <person name="Koetter P."/>
            <person name="Koningstein G."/>
            <person name="Krogh S."/>
            <person name="Kumano M."/>
            <person name="Kurita K."/>
            <person name="Lapidus A."/>
            <person name="Lardinois S."/>
            <person name="Lauber J."/>
            <person name="Lazarevic V."/>
            <person name="Lee S.-M."/>
            <person name="Levine A."/>
            <person name="Liu H."/>
            <person name="Masuda S."/>
            <person name="Mauel C."/>
            <person name="Medigue C."/>
            <person name="Medina N."/>
            <person name="Mellado R.P."/>
            <person name="Mizuno M."/>
            <person name="Moestl D."/>
            <person name="Nakai S."/>
            <person name="Noback M."/>
            <person name="Noone D."/>
            <person name="O'Reilly M."/>
            <person name="Ogawa K."/>
            <person name="Ogiwara A."/>
            <person name="Oudega B."/>
            <person name="Park S.-H."/>
            <person name="Parro V."/>
            <person name="Pohl T.M."/>
            <person name="Portetelle D."/>
            <person name="Porwollik S."/>
            <person name="Prescott A.M."/>
            <person name="Presecan E."/>
            <person name="Pujic P."/>
            <person name="Purnelle B."/>
            <person name="Rapoport G."/>
            <person name="Rey M."/>
            <person name="Reynolds S."/>
            <person name="Rieger M."/>
            <person name="Rivolta C."/>
            <person name="Rocha E."/>
            <person name="Roche B."/>
            <person name="Rose M."/>
            <person name="Sadaie Y."/>
            <person name="Sato T."/>
            <person name="Scanlan E."/>
            <person name="Schleich S."/>
            <person name="Schroeter R."/>
            <person name="Scoffone F."/>
            <person name="Sekiguchi J."/>
            <person name="Sekowska A."/>
            <person name="Seror S.J."/>
            <person name="Serror P."/>
            <person name="Shin B.-S."/>
            <person name="Soldo B."/>
            <person name="Sorokin A."/>
            <person name="Tacconi E."/>
            <person name="Takagi T."/>
            <person name="Takahashi H."/>
            <person name="Takemaru K."/>
            <person name="Takeuchi M."/>
            <person name="Tamakoshi A."/>
            <person name="Tanaka T."/>
            <person name="Terpstra P."/>
            <person name="Tognoni A."/>
            <person name="Tosato V."/>
            <person name="Uchiyama S."/>
            <person name="Vandenbol M."/>
            <person name="Vannier F."/>
            <person name="Vassarotti A."/>
            <person name="Viari A."/>
            <person name="Wambutt R."/>
            <person name="Wedler E."/>
            <person name="Wedler H."/>
            <person name="Weitzenegger T."/>
            <person name="Winters P."/>
            <person name="Wipat A."/>
            <person name="Yamamoto H."/>
            <person name="Yamane K."/>
            <person name="Yasumoto K."/>
            <person name="Yata K."/>
            <person name="Yoshida K."/>
            <person name="Yoshikawa H.-F."/>
            <person name="Zumstein E."/>
            <person name="Yoshikawa H."/>
            <person name="Danchin A."/>
        </authorList>
    </citation>
    <scope>NUCLEOTIDE SEQUENCE [LARGE SCALE GENOMIC DNA]</scope>
    <source>
        <strain>168</strain>
    </source>
</reference>
<reference key="3">
    <citation type="journal article" date="2008" name="FEMS Microbiol. Lett.">
        <title>Glucomannan utilization operon of Bacillus subtilis.</title>
        <authorList>
            <person name="Sadaie Y."/>
            <person name="Nakadate H."/>
            <person name="Fukui R."/>
            <person name="Yee L.M."/>
            <person name="Asai K."/>
        </authorList>
    </citation>
    <scope>INDUCTION</scope>
    <scope>FUNCTION AS A REPRESSOR OF GLUCOMANNAN UTILIZATION OPERON</scope>
    <source>
        <strain>168</strain>
    </source>
</reference>
<feature type="chain" id="PRO_0000360727" description="HTH-type transcriptional regulator GmuR">
    <location>
        <begin position="1"/>
        <end position="237"/>
    </location>
</feature>
<feature type="domain" description="HTH gntR-type" evidence="2">
    <location>
        <begin position="1"/>
        <end position="69"/>
    </location>
</feature>
<feature type="DNA-binding region" description="H-T-H motif" evidence="2">
    <location>
        <begin position="29"/>
        <end position="48"/>
    </location>
</feature>
<keyword id="KW-0963">Cytoplasm</keyword>
<keyword id="KW-0238">DNA-binding</keyword>
<keyword id="KW-1185">Reference proteome</keyword>
<keyword id="KW-0678">Repressor</keyword>
<keyword id="KW-0804">Transcription</keyword>
<keyword id="KW-0805">Transcription regulation</keyword>
<protein>
    <recommendedName>
        <fullName>HTH-type transcriptional regulator GmuR</fullName>
    </recommendedName>
    <alternativeName>
        <fullName>Glucomannan utilization operon repressor</fullName>
    </alternativeName>
    <alternativeName>
        <fullName>Glucomannan utilization protein R</fullName>
    </alternativeName>
</protein>
<accession>O05509</accession>
<accession>Q797D8</accession>
<name>GMUR_BACSU</name>
<proteinExistence type="evidence at protein level"/>
<dbReference type="EMBL" id="D88802">
    <property type="protein sequence ID" value="BAA19709.1"/>
    <property type="molecule type" value="Genomic_DNA"/>
</dbReference>
<dbReference type="EMBL" id="AL009126">
    <property type="protein sequence ID" value="CAB12404.1"/>
    <property type="molecule type" value="Genomic_DNA"/>
</dbReference>
<dbReference type="PIR" id="E69785">
    <property type="entry name" value="E69785"/>
</dbReference>
<dbReference type="RefSeq" id="NP_388466.1">
    <property type="nucleotide sequence ID" value="NC_000964.3"/>
</dbReference>
<dbReference type="RefSeq" id="WP_003234096.1">
    <property type="nucleotide sequence ID" value="NZ_OZ025638.1"/>
</dbReference>
<dbReference type="SMR" id="O05509"/>
<dbReference type="FunCoup" id="O05509">
    <property type="interactions" value="63"/>
</dbReference>
<dbReference type="STRING" id="224308.BSU05850"/>
<dbReference type="PaxDb" id="224308-BSU05850"/>
<dbReference type="EnsemblBacteria" id="CAB12404">
    <property type="protein sequence ID" value="CAB12404"/>
    <property type="gene ID" value="BSU_05850"/>
</dbReference>
<dbReference type="GeneID" id="939879"/>
<dbReference type="KEGG" id="bsu:BSU05850"/>
<dbReference type="PATRIC" id="fig|224308.179.peg.629"/>
<dbReference type="eggNOG" id="COG2188">
    <property type="taxonomic scope" value="Bacteria"/>
</dbReference>
<dbReference type="InParanoid" id="O05509"/>
<dbReference type="OrthoDB" id="9815017at2"/>
<dbReference type="PhylomeDB" id="O05509"/>
<dbReference type="BioCyc" id="BSUB:BSU05850-MONOMER"/>
<dbReference type="Proteomes" id="UP000001570">
    <property type="component" value="Chromosome"/>
</dbReference>
<dbReference type="GO" id="GO:0005737">
    <property type="term" value="C:cytoplasm"/>
    <property type="evidence" value="ECO:0007669"/>
    <property type="project" value="UniProtKB-SubCell"/>
</dbReference>
<dbReference type="GO" id="GO:0003677">
    <property type="term" value="F:DNA binding"/>
    <property type="evidence" value="ECO:0007669"/>
    <property type="project" value="UniProtKB-KW"/>
</dbReference>
<dbReference type="GO" id="GO:0003700">
    <property type="term" value="F:DNA-binding transcription factor activity"/>
    <property type="evidence" value="ECO:0007669"/>
    <property type="project" value="InterPro"/>
</dbReference>
<dbReference type="GO" id="GO:0045892">
    <property type="term" value="P:negative regulation of DNA-templated transcription"/>
    <property type="evidence" value="ECO:0000318"/>
    <property type="project" value="GO_Central"/>
</dbReference>
<dbReference type="CDD" id="cd07377">
    <property type="entry name" value="WHTH_GntR"/>
    <property type="match status" value="1"/>
</dbReference>
<dbReference type="FunFam" id="1.10.10.10:FF:000079">
    <property type="entry name" value="GntR family transcriptional regulator"/>
    <property type="match status" value="1"/>
</dbReference>
<dbReference type="FunFam" id="3.40.1410.10:FF:000008">
    <property type="entry name" value="Transcriptional regulator, GntR family"/>
    <property type="match status" value="1"/>
</dbReference>
<dbReference type="Gene3D" id="3.40.1410.10">
    <property type="entry name" value="Chorismate lyase-like"/>
    <property type="match status" value="1"/>
</dbReference>
<dbReference type="Gene3D" id="1.10.10.10">
    <property type="entry name" value="Winged helix-like DNA-binding domain superfamily/Winged helix DNA-binding domain"/>
    <property type="match status" value="1"/>
</dbReference>
<dbReference type="InterPro" id="IPR050679">
    <property type="entry name" value="Bact_HTH_transcr_reg"/>
</dbReference>
<dbReference type="InterPro" id="IPR028978">
    <property type="entry name" value="Chorismate_lyase_/UTRA_dom_sf"/>
</dbReference>
<dbReference type="InterPro" id="IPR000524">
    <property type="entry name" value="Tscrpt_reg_HTH_GntR"/>
</dbReference>
<dbReference type="InterPro" id="IPR011663">
    <property type="entry name" value="UTRA"/>
</dbReference>
<dbReference type="InterPro" id="IPR036388">
    <property type="entry name" value="WH-like_DNA-bd_sf"/>
</dbReference>
<dbReference type="InterPro" id="IPR036390">
    <property type="entry name" value="WH_DNA-bd_sf"/>
</dbReference>
<dbReference type="PANTHER" id="PTHR44846:SF5">
    <property type="entry name" value="HTH-TYPE TRANSCRIPTIONAL REGULATOR GMUR"/>
    <property type="match status" value="1"/>
</dbReference>
<dbReference type="PANTHER" id="PTHR44846">
    <property type="entry name" value="MANNOSYL-D-GLYCERATE TRANSPORT/METABOLISM SYSTEM REPRESSOR MNGR-RELATED"/>
    <property type="match status" value="1"/>
</dbReference>
<dbReference type="Pfam" id="PF00392">
    <property type="entry name" value="GntR"/>
    <property type="match status" value="1"/>
</dbReference>
<dbReference type="Pfam" id="PF07702">
    <property type="entry name" value="UTRA"/>
    <property type="match status" value="1"/>
</dbReference>
<dbReference type="PRINTS" id="PR00035">
    <property type="entry name" value="HTHGNTR"/>
</dbReference>
<dbReference type="SMART" id="SM00345">
    <property type="entry name" value="HTH_GNTR"/>
    <property type="match status" value="1"/>
</dbReference>
<dbReference type="SMART" id="SM00866">
    <property type="entry name" value="UTRA"/>
    <property type="match status" value="1"/>
</dbReference>
<dbReference type="SUPFAM" id="SSF64288">
    <property type="entry name" value="Chorismate lyase-like"/>
    <property type="match status" value="1"/>
</dbReference>
<dbReference type="SUPFAM" id="SSF46785">
    <property type="entry name" value="Winged helix' DNA-binding domain"/>
    <property type="match status" value="1"/>
</dbReference>
<dbReference type="PROSITE" id="PS50949">
    <property type="entry name" value="HTH_GNTR"/>
    <property type="match status" value="1"/>
</dbReference>
<evidence type="ECO:0000250" key="1"/>
<evidence type="ECO:0000255" key="2">
    <source>
        <dbReference type="PROSITE-ProRule" id="PRU00307"/>
    </source>
</evidence>
<evidence type="ECO:0000269" key="3">
    <source>
    </source>
</evidence>
<gene>
    <name type="primary">gmuR</name>
    <name type="synonym">ydhQ</name>
    <name type="ordered locus">BSU05850</name>
</gene>
<sequence length="237" mass="27374">MNKYEIIANEMRNRIKNNVYPIDQPIPDEVSLAKEFNSSRMTMKRALDNLVAEGLLFRKRGHGTFIIQSAIQDDHVHVVSNEILGLTNLLKDKKIKSKVIQFEVQFPTEEVAAHLSIDQKTPVYYVVRLRIVEGEPYVLEKTYMPTHLIPGINDDVLHDSIYNHITNVLQLKIAGTHRKIRACKSDHIDQQHLGCKQDDPILEVEHVGFLDTGIPFEYSFSRHRHDKFVVTSVNIRR</sequence>